<reference key="1">
    <citation type="journal article" date="2006" name="J. Bacteriol.">
        <title>Pathogenomic sequence analysis of Bacillus cereus and Bacillus thuringiensis isolates closely related to Bacillus anthracis.</title>
        <authorList>
            <person name="Han C.S."/>
            <person name="Xie G."/>
            <person name="Challacombe J.F."/>
            <person name="Altherr M.R."/>
            <person name="Bhotika S.S."/>
            <person name="Bruce D."/>
            <person name="Campbell C.S."/>
            <person name="Campbell M.L."/>
            <person name="Chen J."/>
            <person name="Chertkov O."/>
            <person name="Cleland C."/>
            <person name="Dimitrijevic M."/>
            <person name="Doggett N.A."/>
            <person name="Fawcett J.J."/>
            <person name="Glavina T."/>
            <person name="Goodwin L.A."/>
            <person name="Hill K.K."/>
            <person name="Hitchcock P."/>
            <person name="Jackson P.J."/>
            <person name="Keim P."/>
            <person name="Kewalramani A.R."/>
            <person name="Longmire J."/>
            <person name="Lucas S."/>
            <person name="Malfatti S."/>
            <person name="McMurry K."/>
            <person name="Meincke L.J."/>
            <person name="Misra M."/>
            <person name="Moseman B.L."/>
            <person name="Mundt M."/>
            <person name="Munk A.C."/>
            <person name="Okinaka R.T."/>
            <person name="Parson-Quintana B."/>
            <person name="Reilly L.P."/>
            <person name="Richardson P."/>
            <person name="Robinson D.L."/>
            <person name="Rubin E."/>
            <person name="Saunders E."/>
            <person name="Tapia R."/>
            <person name="Tesmer J.G."/>
            <person name="Thayer N."/>
            <person name="Thompson L.S."/>
            <person name="Tice H."/>
            <person name="Ticknor L.O."/>
            <person name="Wills P.L."/>
            <person name="Brettin T.S."/>
            <person name="Gilna P."/>
        </authorList>
    </citation>
    <scope>NUCLEOTIDE SEQUENCE [LARGE SCALE GENOMIC DNA]</scope>
    <source>
        <strain>ZK / E33L</strain>
    </source>
</reference>
<gene>
    <name evidence="1" type="primary">mnmA</name>
    <name type="synonym">trmU</name>
    <name type="ordered locus">BCE33L4139</name>
</gene>
<name>MNMA_BACCZ</name>
<feature type="chain" id="PRO_0000121605" description="tRNA-specific 2-thiouridylase MnmA">
    <location>
        <begin position="1"/>
        <end position="371"/>
    </location>
</feature>
<feature type="region of interest" description="Interaction with target base in tRNA" evidence="1">
    <location>
        <begin position="99"/>
        <end position="101"/>
    </location>
</feature>
<feature type="region of interest" description="Interaction with tRNA" evidence="1">
    <location>
        <begin position="150"/>
        <end position="152"/>
    </location>
</feature>
<feature type="region of interest" description="Interaction with tRNA" evidence="1">
    <location>
        <begin position="308"/>
        <end position="309"/>
    </location>
</feature>
<feature type="active site" description="Nucleophile" evidence="1">
    <location>
        <position position="104"/>
    </location>
</feature>
<feature type="active site" description="Cysteine persulfide intermediate" evidence="1">
    <location>
        <position position="200"/>
    </location>
</feature>
<feature type="binding site" evidence="1">
    <location>
        <begin position="13"/>
        <end position="20"/>
    </location>
    <ligand>
        <name>ATP</name>
        <dbReference type="ChEBI" id="CHEBI:30616"/>
    </ligand>
</feature>
<feature type="binding site" evidence="1">
    <location>
        <position position="39"/>
    </location>
    <ligand>
        <name>ATP</name>
        <dbReference type="ChEBI" id="CHEBI:30616"/>
    </ligand>
</feature>
<feature type="binding site" evidence="1">
    <location>
        <position position="128"/>
    </location>
    <ligand>
        <name>ATP</name>
        <dbReference type="ChEBI" id="CHEBI:30616"/>
    </ligand>
</feature>
<feature type="site" description="Interaction with tRNA" evidence="1">
    <location>
        <position position="129"/>
    </location>
</feature>
<feature type="site" description="Interaction with tRNA" evidence="1">
    <location>
        <position position="341"/>
    </location>
</feature>
<feature type="disulfide bond" description="Alternate" evidence="1">
    <location>
        <begin position="104"/>
        <end position="200"/>
    </location>
</feature>
<accession>Q634E9</accession>
<dbReference type="EC" id="2.8.1.13" evidence="1"/>
<dbReference type="EMBL" id="CP000001">
    <property type="protein sequence ID" value="AAU16130.1"/>
    <property type="molecule type" value="Genomic_DNA"/>
</dbReference>
<dbReference type="RefSeq" id="WP_001038006.1">
    <property type="nucleotide sequence ID" value="NZ_CP009968.1"/>
</dbReference>
<dbReference type="SMR" id="Q634E9"/>
<dbReference type="GeneID" id="93006705"/>
<dbReference type="KEGG" id="bcz:BCE33L4139"/>
<dbReference type="PATRIC" id="fig|288681.22.peg.1244"/>
<dbReference type="Proteomes" id="UP000002612">
    <property type="component" value="Chromosome"/>
</dbReference>
<dbReference type="GO" id="GO:0005737">
    <property type="term" value="C:cytoplasm"/>
    <property type="evidence" value="ECO:0007669"/>
    <property type="project" value="UniProtKB-SubCell"/>
</dbReference>
<dbReference type="GO" id="GO:0005524">
    <property type="term" value="F:ATP binding"/>
    <property type="evidence" value="ECO:0007669"/>
    <property type="project" value="UniProtKB-KW"/>
</dbReference>
<dbReference type="GO" id="GO:0000049">
    <property type="term" value="F:tRNA binding"/>
    <property type="evidence" value="ECO:0007669"/>
    <property type="project" value="UniProtKB-KW"/>
</dbReference>
<dbReference type="GO" id="GO:0103016">
    <property type="term" value="F:tRNA-uridine 2-sulfurtransferase activity"/>
    <property type="evidence" value="ECO:0007669"/>
    <property type="project" value="UniProtKB-EC"/>
</dbReference>
<dbReference type="GO" id="GO:0002143">
    <property type="term" value="P:tRNA wobble position uridine thiolation"/>
    <property type="evidence" value="ECO:0007669"/>
    <property type="project" value="TreeGrafter"/>
</dbReference>
<dbReference type="CDD" id="cd01998">
    <property type="entry name" value="MnmA_TRMU-like"/>
    <property type="match status" value="1"/>
</dbReference>
<dbReference type="FunFam" id="2.30.30.280:FF:000001">
    <property type="entry name" value="tRNA-specific 2-thiouridylase MnmA"/>
    <property type="match status" value="1"/>
</dbReference>
<dbReference type="FunFam" id="2.40.30.10:FF:000023">
    <property type="entry name" value="tRNA-specific 2-thiouridylase MnmA"/>
    <property type="match status" value="1"/>
</dbReference>
<dbReference type="FunFam" id="3.40.50.620:FF:000004">
    <property type="entry name" value="tRNA-specific 2-thiouridylase MnmA"/>
    <property type="match status" value="1"/>
</dbReference>
<dbReference type="Gene3D" id="2.30.30.280">
    <property type="entry name" value="Adenine nucleotide alpha hydrolases-like domains"/>
    <property type="match status" value="1"/>
</dbReference>
<dbReference type="Gene3D" id="3.40.50.620">
    <property type="entry name" value="HUPs"/>
    <property type="match status" value="1"/>
</dbReference>
<dbReference type="Gene3D" id="2.40.30.10">
    <property type="entry name" value="Translation factors"/>
    <property type="match status" value="1"/>
</dbReference>
<dbReference type="HAMAP" id="MF_00144">
    <property type="entry name" value="tRNA_thiouridyl_MnmA"/>
    <property type="match status" value="1"/>
</dbReference>
<dbReference type="InterPro" id="IPR004506">
    <property type="entry name" value="MnmA-like"/>
</dbReference>
<dbReference type="InterPro" id="IPR046885">
    <property type="entry name" value="MnmA-like_C"/>
</dbReference>
<dbReference type="InterPro" id="IPR046884">
    <property type="entry name" value="MnmA-like_central"/>
</dbReference>
<dbReference type="InterPro" id="IPR023382">
    <property type="entry name" value="MnmA-like_central_sf"/>
</dbReference>
<dbReference type="InterPro" id="IPR014729">
    <property type="entry name" value="Rossmann-like_a/b/a_fold"/>
</dbReference>
<dbReference type="NCBIfam" id="NF001138">
    <property type="entry name" value="PRK00143.1"/>
    <property type="match status" value="1"/>
</dbReference>
<dbReference type="NCBIfam" id="TIGR00420">
    <property type="entry name" value="trmU"/>
    <property type="match status" value="1"/>
</dbReference>
<dbReference type="PANTHER" id="PTHR11933:SF5">
    <property type="entry name" value="MITOCHONDRIAL TRNA-SPECIFIC 2-THIOURIDYLASE 1"/>
    <property type="match status" value="1"/>
</dbReference>
<dbReference type="PANTHER" id="PTHR11933">
    <property type="entry name" value="TRNA 5-METHYLAMINOMETHYL-2-THIOURIDYLATE -METHYLTRANSFERASE"/>
    <property type="match status" value="1"/>
</dbReference>
<dbReference type="Pfam" id="PF03054">
    <property type="entry name" value="tRNA_Me_trans"/>
    <property type="match status" value="1"/>
</dbReference>
<dbReference type="Pfam" id="PF20258">
    <property type="entry name" value="tRNA_Me_trans_C"/>
    <property type="match status" value="1"/>
</dbReference>
<dbReference type="Pfam" id="PF20259">
    <property type="entry name" value="tRNA_Me_trans_M"/>
    <property type="match status" value="1"/>
</dbReference>
<dbReference type="SUPFAM" id="SSF52402">
    <property type="entry name" value="Adenine nucleotide alpha hydrolases-like"/>
    <property type="match status" value="1"/>
</dbReference>
<organism>
    <name type="scientific">Bacillus cereus (strain ZK / E33L)</name>
    <dbReference type="NCBI Taxonomy" id="288681"/>
    <lineage>
        <taxon>Bacteria</taxon>
        <taxon>Bacillati</taxon>
        <taxon>Bacillota</taxon>
        <taxon>Bacilli</taxon>
        <taxon>Bacillales</taxon>
        <taxon>Bacillaceae</taxon>
        <taxon>Bacillus</taxon>
        <taxon>Bacillus cereus group</taxon>
    </lineage>
</organism>
<comment type="function">
    <text evidence="1">Catalyzes the 2-thiolation of uridine at the wobble position (U34) of tRNA, leading to the formation of s(2)U34.</text>
</comment>
<comment type="catalytic activity">
    <reaction evidence="1">
        <text>S-sulfanyl-L-cysteinyl-[protein] + uridine(34) in tRNA + AH2 + ATP = 2-thiouridine(34) in tRNA + L-cysteinyl-[protein] + A + AMP + diphosphate + H(+)</text>
        <dbReference type="Rhea" id="RHEA:47032"/>
        <dbReference type="Rhea" id="RHEA-COMP:10131"/>
        <dbReference type="Rhea" id="RHEA-COMP:11726"/>
        <dbReference type="Rhea" id="RHEA-COMP:11727"/>
        <dbReference type="Rhea" id="RHEA-COMP:11728"/>
        <dbReference type="ChEBI" id="CHEBI:13193"/>
        <dbReference type="ChEBI" id="CHEBI:15378"/>
        <dbReference type="ChEBI" id="CHEBI:17499"/>
        <dbReference type="ChEBI" id="CHEBI:29950"/>
        <dbReference type="ChEBI" id="CHEBI:30616"/>
        <dbReference type="ChEBI" id="CHEBI:33019"/>
        <dbReference type="ChEBI" id="CHEBI:61963"/>
        <dbReference type="ChEBI" id="CHEBI:65315"/>
        <dbReference type="ChEBI" id="CHEBI:87170"/>
        <dbReference type="ChEBI" id="CHEBI:456215"/>
        <dbReference type="EC" id="2.8.1.13"/>
    </reaction>
</comment>
<comment type="subcellular location">
    <subcellularLocation>
        <location evidence="1">Cytoplasm</location>
    </subcellularLocation>
</comment>
<comment type="similarity">
    <text evidence="1">Belongs to the MnmA/TRMU family.</text>
</comment>
<evidence type="ECO:0000255" key="1">
    <source>
        <dbReference type="HAMAP-Rule" id="MF_00144"/>
    </source>
</evidence>
<keyword id="KW-0067">ATP-binding</keyword>
<keyword id="KW-0963">Cytoplasm</keyword>
<keyword id="KW-1015">Disulfide bond</keyword>
<keyword id="KW-0547">Nucleotide-binding</keyword>
<keyword id="KW-0694">RNA-binding</keyword>
<keyword id="KW-0808">Transferase</keyword>
<keyword id="KW-0819">tRNA processing</keyword>
<keyword id="KW-0820">tRNA-binding</keyword>
<sequence>MNKLPHETRVVIGMSGGVDSSVAALLLKEQGYDVIGIFMKNWDDTDENGVCTATEDYNDVIEVCNQIGIPYYAVNFEKQYWDKVFTYFLDEYRAGRTPNPDVMCNKEIKFKAFLEHAIALGADYVATGHYARVAYMDGEYKMLRGVDDNKDQTYFLNQLSQEQLSKTMFPLGELKKPQIREMAKEAGLATAAKKDSTGICFIGERNFKDFLSNYLPAQPGVMQTLSGEVKGKHDGLMYYTIGQRHGLGIGGNGDPWFAVGKNLKENILYVDQGFHNELLYGDEVIATNVGWVSNEAKEKEFKCTAKFRYRQEDNKVTVQIVDENTVRILCDEPIRAITPGQAVVFYDGDECLGGATIDEVYRSGKKLDYLG</sequence>
<protein>
    <recommendedName>
        <fullName evidence="1">tRNA-specific 2-thiouridylase MnmA</fullName>
        <ecNumber evidence="1">2.8.1.13</ecNumber>
    </recommendedName>
</protein>
<proteinExistence type="inferred from homology"/>